<organism>
    <name type="scientific">Bacillus mycoides (strain KBAB4)</name>
    <name type="common">Bacillus weihenstephanensis</name>
    <dbReference type="NCBI Taxonomy" id="315730"/>
    <lineage>
        <taxon>Bacteria</taxon>
        <taxon>Bacillati</taxon>
        <taxon>Bacillota</taxon>
        <taxon>Bacilli</taxon>
        <taxon>Bacillales</taxon>
        <taxon>Bacillaceae</taxon>
        <taxon>Bacillus</taxon>
        <taxon>Bacillus cereus group</taxon>
    </lineage>
</organism>
<evidence type="ECO:0000255" key="1">
    <source>
        <dbReference type="HAMAP-Rule" id="MF_00313"/>
    </source>
</evidence>
<keyword id="KW-0378">Hydrolase</keyword>
<accession>A9VSP6</accession>
<gene>
    <name evidence="1" type="primary">glsA</name>
    <name type="ordered locus">BcerKBAB4_0416</name>
</gene>
<protein>
    <recommendedName>
        <fullName evidence="1">Glutaminase</fullName>
        <ecNumber evidence="1">3.5.1.2</ecNumber>
    </recommendedName>
</protein>
<dbReference type="EC" id="3.5.1.2" evidence="1"/>
<dbReference type="EMBL" id="CP000903">
    <property type="protein sequence ID" value="ABY41682.1"/>
    <property type="molecule type" value="Genomic_DNA"/>
</dbReference>
<dbReference type="RefSeq" id="WP_002029606.1">
    <property type="nucleotide sequence ID" value="NC_010184.1"/>
</dbReference>
<dbReference type="SMR" id="A9VSP6"/>
<dbReference type="KEGG" id="bwe:BcerKBAB4_0416"/>
<dbReference type="eggNOG" id="COG2066">
    <property type="taxonomic scope" value="Bacteria"/>
</dbReference>
<dbReference type="HOGENOM" id="CLU_027932_1_0_9"/>
<dbReference type="Proteomes" id="UP000002154">
    <property type="component" value="Chromosome"/>
</dbReference>
<dbReference type="GO" id="GO:0004359">
    <property type="term" value="F:glutaminase activity"/>
    <property type="evidence" value="ECO:0007669"/>
    <property type="project" value="UniProtKB-UniRule"/>
</dbReference>
<dbReference type="GO" id="GO:0006537">
    <property type="term" value="P:glutamate biosynthetic process"/>
    <property type="evidence" value="ECO:0007669"/>
    <property type="project" value="TreeGrafter"/>
</dbReference>
<dbReference type="GO" id="GO:0006543">
    <property type="term" value="P:glutamine catabolic process"/>
    <property type="evidence" value="ECO:0007669"/>
    <property type="project" value="TreeGrafter"/>
</dbReference>
<dbReference type="FunFam" id="1.10.1500.10:FF:000001">
    <property type="entry name" value="Glutaminase"/>
    <property type="match status" value="1"/>
</dbReference>
<dbReference type="FunFam" id="3.40.710.10:FF:000005">
    <property type="entry name" value="Glutaminase"/>
    <property type="match status" value="1"/>
</dbReference>
<dbReference type="Gene3D" id="1.10.1500.10">
    <property type="match status" value="1"/>
</dbReference>
<dbReference type="Gene3D" id="3.40.710.10">
    <property type="entry name" value="DD-peptidase/beta-lactamase superfamily"/>
    <property type="match status" value="1"/>
</dbReference>
<dbReference type="HAMAP" id="MF_00313">
    <property type="entry name" value="Glutaminase"/>
    <property type="match status" value="1"/>
</dbReference>
<dbReference type="InterPro" id="IPR012338">
    <property type="entry name" value="Beta-lactam/transpept-like"/>
</dbReference>
<dbReference type="InterPro" id="IPR015868">
    <property type="entry name" value="Glutaminase"/>
</dbReference>
<dbReference type="NCBIfam" id="TIGR03814">
    <property type="entry name" value="Gln_ase"/>
    <property type="match status" value="1"/>
</dbReference>
<dbReference type="PANTHER" id="PTHR12544">
    <property type="entry name" value="GLUTAMINASE"/>
    <property type="match status" value="1"/>
</dbReference>
<dbReference type="PANTHER" id="PTHR12544:SF29">
    <property type="entry name" value="GLUTAMINASE"/>
    <property type="match status" value="1"/>
</dbReference>
<dbReference type="Pfam" id="PF04960">
    <property type="entry name" value="Glutaminase"/>
    <property type="match status" value="1"/>
</dbReference>
<dbReference type="SUPFAM" id="SSF56601">
    <property type="entry name" value="beta-lactamase/transpeptidase-like"/>
    <property type="match status" value="1"/>
</dbReference>
<sequence>MQCIETNNLQQLLEQVKPYTKKGKLATYIPELGNANPNDLGIAIFHKETEYIHAGNSQTLFTLQSISKVITLALALLDRGEEYVFSKVGMEPTGDPFNSIIKLETTSSSKPLNPMINAGALAITSMLAGNDNEEKMERILQFVRDITDNPTISYSSKVATSELETAYLNRSLCYYMKQNGIIDNDIEELMDLYTRQCAIEVNCIDLARIGLIFAMDGYDPYKKKQIIPKHITKICKTFMVTCGMYNESGEFAIRVGIPAKSGVAGGIFGCVKGEMGIGIFGPALDANGNSIAGFKILELLSAQEGWSMF</sequence>
<feature type="chain" id="PRO_1000115692" description="Glutaminase">
    <location>
        <begin position="1"/>
        <end position="309"/>
    </location>
</feature>
<feature type="binding site" evidence="1">
    <location>
        <position position="65"/>
    </location>
    <ligand>
        <name>substrate</name>
    </ligand>
</feature>
<feature type="binding site" evidence="1">
    <location>
        <position position="117"/>
    </location>
    <ligand>
        <name>substrate</name>
    </ligand>
</feature>
<feature type="binding site" evidence="1">
    <location>
        <position position="162"/>
    </location>
    <ligand>
        <name>substrate</name>
    </ligand>
</feature>
<feature type="binding site" evidence="1">
    <location>
        <position position="169"/>
    </location>
    <ligand>
        <name>substrate</name>
    </ligand>
</feature>
<feature type="binding site" evidence="1">
    <location>
        <position position="193"/>
    </location>
    <ligand>
        <name>substrate</name>
    </ligand>
</feature>
<feature type="binding site" evidence="1">
    <location>
        <position position="245"/>
    </location>
    <ligand>
        <name>substrate</name>
    </ligand>
</feature>
<feature type="binding site" evidence="1">
    <location>
        <position position="263"/>
    </location>
    <ligand>
        <name>substrate</name>
    </ligand>
</feature>
<comment type="catalytic activity">
    <reaction evidence="1">
        <text>L-glutamine + H2O = L-glutamate + NH4(+)</text>
        <dbReference type="Rhea" id="RHEA:15889"/>
        <dbReference type="ChEBI" id="CHEBI:15377"/>
        <dbReference type="ChEBI" id="CHEBI:28938"/>
        <dbReference type="ChEBI" id="CHEBI:29985"/>
        <dbReference type="ChEBI" id="CHEBI:58359"/>
        <dbReference type="EC" id="3.5.1.2"/>
    </reaction>
</comment>
<comment type="subunit">
    <text evidence="1">Homotetramer.</text>
</comment>
<comment type="similarity">
    <text evidence="1">Belongs to the glutaminase family.</text>
</comment>
<name>GLSA_BACMK</name>
<reference key="1">
    <citation type="journal article" date="2008" name="Chem. Biol. Interact.">
        <title>Extending the Bacillus cereus group genomics to putative food-borne pathogens of different toxicity.</title>
        <authorList>
            <person name="Lapidus A."/>
            <person name="Goltsman E."/>
            <person name="Auger S."/>
            <person name="Galleron N."/>
            <person name="Segurens B."/>
            <person name="Dossat C."/>
            <person name="Land M.L."/>
            <person name="Broussolle V."/>
            <person name="Brillard J."/>
            <person name="Guinebretiere M.-H."/>
            <person name="Sanchis V."/>
            <person name="Nguen-the C."/>
            <person name="Lereclus D."/>
            <person name="Richardson P."/>
            <person name="Wincker P."/>
            <person name="Weissenbach J."/>
            <person name="Ehrlich S.D."/>
            <person name="Sorokin A."/>
        </authorList>
    </citation>
    <scope>NUCLEOTIDE SEQUENCE [LARGE SCALE GENOMIC DNA]</scope>
    <source>
        <strain>KBAB4</strain>
    </source>
</reference>
<proteinExistence type="inferred from homology"/>